<protein>
    <recommendedName>
        <fullName evidence="1">Single-stranded DNA-binding protein</fullName>
        <shortName evidence="1">SSB</shortName>
    </recommendedName>
</protein>
<proteinExistence type="inferred from homology"/>
<organism>
    <name type="scientific">Lactiplantibacillus plantarum (strain ATCC BAA-793 / NCIMB 8826 / WCFS1)</name>
    <name type="common">Lactobacillus plantarum</name>
    <dbReference type="NCBI Taxonomy" id="220668"/>
    <lineage>
        <taxon>Bacteria</taxon>
        <taxon>Bacillati</taxon>
        <taxon>Bacillota</taxon>
        <taxon>Bacilli</taxon>
        <taxon>Lactobacillales</taxon>
        <taxon>Lactobacillaceae</taxon>
        <taxon>Lactiplantibacillus</taxon>
    </lineage>
</organism>
<sequence>MINRTILVGRLTRDPELRYTNGGAAVATFTIAVNRQFTNQNGEREADFISCVIWRKAAENFANFTHKGSLVGIDGRIQTRNYENQQGVRVYVTEVVVENFSLLESRAESERHQAANGGSGNNNYNNGNSNYNNNNNGYSNQGQNAAPQQSSANNNNPFGNGNTGNASSAAPSSSANNNNQADPFANNGDQIDISDDDLPF</sequence>
<accession>Q890K1</accession>
<accession>F9US40</accession>
<comment type="function">
    <text evidence="1">Plays an important role in DNA replication, recombination and repair. Binds to ssDNA and to an array of partner proteins to recruit them to their sites of action during DNA metabolism.</text>
</comment>
<comment type="subunit">
    <text evidence="1">Homotetramer.</text>
</comment>
<dbReference type="EMBL" id="AL935263">
    <property type="protein sequence ID" value="CCC77587.1"/>
    <property type="molecule type" value="Genomic_DNA"/>
</dbReference>
<dbReference type="RefSeq" id="WP_011100851.1">
    <property type="nucleotide sequence ID" value="NC_004567.2"/>
</dbReference>
<dbReference type="RefSeq" id="YP_004888101.1">
    <property type="nucleotide sequence ID" value="NC_004567.2"/>
</dbReference>
<dbReference type="SMR" id="Q890K1"/>
<dbReference type="STRING" id="220668.lp_0010"/>
<dbReference type="EnsemblBacteria" id="CCC77587">
    <property type="protein sequence ID" value="CCC77587"/>
    <property type="gene ID" value="lp_0010"/>
</dbReference>
<dbReference type="GeneID" id="89667773"/>
<dbReference type="KEGG" id="lpl:lp_0010"/>
<dbReference type="PATRIC" id="fig|220668.9.peg.8"/>
<dbReference type="eggNOG" id="COG0629">
    <property type="taxonomic scope" value="Bacteria"/>
</dbReference>
<dbReference type="HOGENOM" id="CLU_078758_6_2_9"/>
<dbReference type="OrthoDB" id="9809878at2"/>
<dbReference type="PhylomeDB" id="Q890K1"/>
<dbReference type="Proteomes" id="UP000000432">
    <property type="component" value="Chromosome"/>
</dbReference>
<dbReference type="GO" id="GO:0009295">
    <property type="term" value="C:nucleoid"/>
    <property type="evidence" value="ECO:0007669"/>
    <property type="project" value="TreeGrafter"/>
</dbReference>
<dbReference type="GO" id="GO:0003697">
    <property type="term" value="F:single-stranded DNA binding"/>
    <property type="evidence" value="ECO:0007669"/>
    <property type="project" value="UniProtKB-UniRule"/>
</dbReference>
<dbReference type="GO" id="GO:0006310">
    <property type="term" value="P:DNA recombination"/>
    <property type="evidence" value="ECO:0007669"/>
    <property type="project" value="UniProtKB-UniRule"/>
</dbReference>
<dbReference type="GO" id="GO:0006281">
    <property type="term" value="P:DNA repair"/>
    <property type="evidence" value="ECO:0007669"/>
    <property type="project" value="UniProtKB-UniRule"/>
</dbReference>
<dbReference type="GO" id="GO:0006260">
    <property type="term" value="P:DNA replication"/>
    <property type="evidence" value="ECO:0007669"/>
    <property type="project" value="UniProtKB-UniRule"/>
</dbReference>
<dbReference type="CDD" id="cd04496">
    <property type="entry name" value="SSB_OBF"/>
    <property type="match status" value="1"/>
</dbReference>
<dbReference type="FunFam" id="2.40.50.140:FF:000084">
    <property type="entry name" value="Single-stranded DNA-binding protein"/>
    <property type="match status" value="1"/>
</dbReference>
<dbReference type="Gene3D" id="2.40.50.140">
    <property type="entry name" value="Nucleic acid-binding proteins"/>
    <property type="match status" value="1"/>
</dbReference>
<dbReference type="HAMAP" id="MF_00984">
    <property type="entry name" value="SSB"/>
    <property type="match status" value="1"/>
</dbReference>
<dbReference type="InterPro" id="IPR012340">
    <property type="entry name" value="NA-bd_OB-fold"/>
</dbReference>
<dbReference type="InterPro" id="IPR000424">
    <property type="entry name" value="Primosome_PriB/ssb"/>
</dbReference>
<dbReference type="InterPro" id="IPR011344">
    <property type="entry name" value="ssDNA-bd"/>
</dbReference>
<dbReference type="NCBIfam" id="TIGR00621">
    <property type="entry name" value="ssb"/>
    <property type="match status" value="1"/>
</dbReference>
<dbReference type="PANTHER" id="PTHR10302">
    <property type="entry name" value="SINGLE-STRANDED DNA-BINDING PROTEIN"/>
    <property type="match status" value="1"/>
</dbReference>
<dbReference type="PANTHER" id="PTHR10302:SF27">
    <property type="entry name" value="SINGLE-STRANDED DNA-BINDING PROTEIN"/>
    <property type="match status" value="1"/>
</dbReference>
<dbReference type="Pfam" id="PF00436">
    <property type="entry name" value="SSB"/>
    <property type="match status" value="1"/>
</dbReference>
<dbReference type="SUPFAM" id="SSF50249">
    <property type="entry name" value="Nucleic acid-binding proteins"/>
    <property type="match status" value="1"/>
</dbReference>
<dbReference type="PROSITE" id="PS50935">
    <property type="entry name" value="SSB"/>
    <property type="match status" value="1"/>
</dbReference>
<name>SSB_LACPL</name>
<evidence type="ECO:0000255" key="1">
    <source>
        <dbReference type="HAMAP-Rule" id="MF_00984"/>
    </source>
</evidence>
<evidence type="ECO:0000256" key="2">
    <source>
        <dbReference type="SAM" id="MobiDB-lite"/>
    </source>
</evidence>
<feature type="chain" id="PRO_0000096054" description="Single-stranded DNA-binding protein">
    <location>
        <begin position="1"/>
        <end position="200"/>
    </location>
</feature>
<feature type="domain" description="SSB" evidence="1">
    <location>
        <begin position="1"/>
        <end position="104"/>
    </location>
</feature>
<feature type="region of interest" description="Disordered" evidence="2">
    <location>
        <begin position="108"/>
        <end position="200"/>
    </location>
</feature>
<feature type="short sequence motif" description="Important for interaction with partner proteins" evidence="1">
    <location>
        <begin position="195"/>
        <end position="200"/>
    </location>
</feature>
<feature type="compositionally biased region" description="Low complexity" evidence="2">
    <location>
        <begin position="121"/>
        <end position="187"/>
    </location>
</feature>
<keyword id="KW-0227">DNA damage</keyword>
<keyword id="KW-0233">DNA recombination</keyword>
<keyword id="KW-0234">DNA repair</keyword>
<keyword id="KW-0235">DNA replication</keyword>
<keyword id="KW-0238">DNA-binding</keyword>
<keyword id="KW-1185">Reference proteome</keyword>
<reference key="1">
    <citation type="journal article" date="2003" name="Proc. Natl. Acad. Sci. U.S.A.">
        <title>Complete genome sequence of Lactobacillus plantarum WCFS1.</title>
        <authorList>
            <person name="Kleerebezem M."/>
            <person name="Boekhorst J."/>
            <person name="van Kranenburg R."/>
            <person name="Molenaar D."/>
            <person name="Kuipers O.P."/>
            <person name="Leer R."/>
            <person name="Tarchini R."/>
            <person name="Peters S.A."/>
            <person name="Sandbrink H.M."/>
            <person name="Fiers M.W.E.J."/>
            <person name="Stiekema W."/>
            <person name="Klein Lankhorst R.M."/>
            <person name="Bron P.A."/>
            <person name="Hoffer S.M."/>
            <person name="Nierop Groot M.N."/>
            <person name="Kerkhoven R."/>
            <person name="De Vries M."/>
            <person name="Ursing B."/>
            <person name="De Vos W.M."/>
            <person name="Siezen R.J."/>
        </authorList>
    </citation>
    <scope>NUCLEOTIDE SEQUENCE [LARGE SCALE GENOMIC DNA]</scope>
    <source>
        <strain>ATCC BAA-793 / NCIMB 8826 / WCFS1</strain>
    </source>
</reference>
<reference key="2">
    <citation type="journal article" date="2012" name="J. Bacteriol.">
        <title>Complete resequencing and reannotation of the Lactobacillus plantarum WCFS1 genome.</title>
        <authorList>
            <person name="Siezen R.J."/>
            <person name="Francke C."/>
            <person name="Renckens B."/>
            <person name="Boekhorst J."/>
            <person name="Wels M."/>
            <person name="Kleerebezem M."/>
            <person name="van Hijum S.A."/>
        </authorList>
    </citation>
    <scope>NUCLEOTIDE SEQUENCE [LARGE SCALE GENOMIC DNA]</scope>
    <scope>GENOME REANNOTATION</scope>
    <source>
        <strain>ATCC BAA-793 / NCIMB 8826 / WCFS1</strain>
    </source>
</reference>
<gene>
    <name type="primary">ssb</name>
    <name type="ordered locus">lp_0010</name>
</gene>